<proteinExistence type="inferred from homology"/>
<gene>
    <name type="primary">citF</name>
    <name type="ordered locus">HI_0022</name>
</gene>
<name>CILA_HAEIN</name>
<reference key="1">
    <citation type="journal article" date="1995" name="Science">
        <title>Whole-genome random sequencing and assembly of Haemophilus influenzae Rd.</title>
        <authorList>
            <person name="Fleischmann R.D."/>
            <person name="Adams M.D."/>
            <person name="White O."/>
            <person name="Clayton R.A."/>
            <person name="Kirkness E.F."/>
            <person name="Kerlavage A.R."/>
            <person name="Bult C.J."/>
            <person name="Tomb J.-F."/>
            <person name="Dougherty B.A."/>
            <person name="Merrick J.M."/>
            <person name="McKenney K."/>
            <person name="Sutton G.G."/>
            <person name="FitzHugh W."/>
            <person name="Fields C.A."/>
            <person name="Gocayne J.D."/>
            <person name="Scott J.D."/>
            <person name="Shirley R."/>
            <person name="Liu L.-I."/>
            <person name="Glodek A."/>
            <person name="Kelley J.M."/>
            <person name="Weidman J.F."/>
            <person name="Phillips C.A."/>
            <person name="Spriggs T."/>
            <person name="Hedblom E."/>
            <person name="Cotton M.D."/>
            <person name="Utterback T.R."/>
            <person name="Hanna M.C."/>
            <person name="Nguyen D.T."/>
            <person name="Saudek D.M."/>
            <person name="Brandon R.C."/>
            <person name="Fine L.D."/>
            <person name="Fritchman J.L."/>
            <person name="Fuhrmann J.L."/>
            <person name="Geoghagen N.S.M."/>
            <person name="Gnehm C.L."/>
            <person name="McDonald L.A."/>
            <person name="Small K.V."/>
            <person name="Fraser C.M."/>
            <person name="Smith H.O."/>
            <person name="Venter J.C."/>
        </authorList>
    </citation>
    <scope>NUCLEOTIDE SEQUENCE [LARGE SCALE GENOMIC DNA]</scope>
    <source>
        <strain>ATCC 51907 / DSM 11121 / KW20 / Rd</strain>
    </source>
</reference>
<evidence type="ECO:0000250" key="1"/>
<protein>
    <recommendedName>
        <fullName>Citrate lyase alpha chain</fullName>
        <shortName>Citrase alpha chain</shortName>
        <ecNumber>4.1.3.6</ecNumber>
    </recommendedName>
    <alternativeName>
        <fullName>Citrate (pro-3S)-lyase alpha chain</fullName>
    </alternativeName>
    <alternativeName>
        <fullName>Citrate CoA-transferase subunit</fullName>
        <ecNumber>2.8.3.10</ecNumber>
    </alternativeName>
</protein>
<comment type="function">
    <text evidence="1">Represents a citrate:acetyl-ACP transferase.</text>
</comment>
<comment type="catalytic activity">
    <reaction>
        <text>citrate = oxaloacetate + acetate</text>
        <dbReference type="Rhea" id="RHEA:10760"/>
        <dbReference type="ChEBI" id="CHEBI:16452"/>
        <dbReference type="ChEBI" id="CHEBI:16947"/>
        <dbReference type="ChEBI" id="CHEBI:30089"/>
        <dbReference type="EC" id="4.1.3.6"/>
    </reaction>
</comment>
<comment type="catalytic activity">
    <reaction>
        <text>citrate + acetyl-CoA = (3S)-citryl-CoA + acetate</text>
        <dbReference type="Rhea" id="RHEA:19405"/>
        <dbReference type="ChEBI" id="CHEBI:16947"/>
        <dbReference type="ChEBI" id="CHEBI:30089"/>
        <dbReference type="ChEBI" id="CHEBI:57288"/>
        <dbReference type="ChEBI" id="CHEBI:57321"/>
        <dbReference type="EC" id="2.8.3.10"/>
    </reaction>
</comment>
<comment type="subunit">
    <text evidence="1">Oligomer with a subunit composition of (alpha,beta,gamma)6.</text>
</comment>
<comment type="subcellular location">
    <subcellularLocation>
        <location>Cytoplasm</location>
    </subcellularLocation>
</comment>
<accession>P44459</accession>
<feature type="chain" id="PRO_0000089753" description="Citrate lyase alpha chain">
    <location>
        <begin position="1"/>
        <end position="500"/>
    </location>
</feature>
<organism>
    <name type="scientific">Haemophilus influenzae (strain ATCC 51907 / DSM 11121 / KW20 / Rd)</name>
    <dbReference type="NCBI Taxonomy" id="71421"/>
    <lineage>
        <taxon>Bacteria</taxon>
        <taxon>Pseudomonadati</taxon>
        <taxon>Pseudomonadota</taxon>
        <taxon>Gammaproteobacteria</taxon>
        <taxon>Pasteurellales</taxon>
        <taxon>Pasteurellaceae</taxon>
        <taxon>Haemophilus</taxon>
    </lineage>
</organism>
<sequence length="500" mass="54134">MTTREQRIEKYHADRSVYQAVPKSESLSRTAKDRKLCTSLEEAIKRSGLKDGMTVSFHHAFRGGDFVVNMVMNKIAEMGFKNLTLASSSLIDSHFPIVEHIKNGVVTKIYSSGLRGELAEQISRGLLNEPVNIHSHGGRVHLVKSGELKIDVAFLGVPCCDTFGNANGFTGKSKCGSLGYARVDAEYADKVVLLTEEFVEYPHHPISIAQDQVDLIVQVEAVGDPKKIGGGATRMTTNPRELLIARKCAEVIFASGYFKDGFSLQTGSGGAALAVTRFLEEKMRRENITADFALGGITASMVALHEAGLIKKLLDVQSFDSVAAESLARNPNHIEVSANQYANYSSKGASVERLDMVILSALEIDTKFNVNVLTGSDGVIRGASGGHCDTAASAQVAIIVAPLVRGRIPTVVENVITCVTPGENVDILVTDHGVAVNPKRPDLIEALSKTDIPLFTIEQLCERAYSITGKPKEIEFTNKPVAVVRYRDGSVIDTVYQVKD</sequence>
<keyword id="KW-0963">Cytoplasm</keyword>
<keyword id="KW-0456">Lyase</keyword>
<keyword id="KW-1185">Reference proteome</keyword>
<keyword id="KW-0808">Transferase</keyword>
<dbReference type="EC" id="4.1.3.6"/>
<dbReference type="EC" id="2.8.3.10"/>
<dbReference type="EMBL" id="L42023">
    <property type="protein sequence ID" value="AAC21700.1"/>
    <property type="molecule type" value="Genomic_DNA"/>
</dbReference>
<dbReference type="PIR" id="C64043">
    <property type="entry name" value="C64043"/>
</dbReference>
<dbReference type="RefSeq" id="NP_438195.1">
    <property type="nucleotide sequence ID" value="NC_000907.1"/>
</dbReference>
<dbReference type="SMR" id="P44459"/>
<dbReference type="STRING" id="71421.HI_0022"/>
<dbReference type="EnsemblBacteria" id="AAC21700">
    <property type="protein sequence ID" value="AAC21700"/>
    <property type="gene ID" value="HI_0022"/>
</dbReference>
<dbReference type="KEGG" id="hin:HI_0022"/>
<dbReference type="PATRIC" id="fig|71421.8.peg.22"/>
<dbReference type="eggNOG" id="COG3051">
    <property type="taxonomic scope" value="Bacteria"/>
</dbReference>
<dbReference type="HOGENOM" id="CLU_046521_2_0_6"/>
<dbReference type="OrthoDB" id="9767643at2"/>
<dbReference type="PhylomeDB" id="P44459"/>
<dbReference type="BioCyc" id="HINF71421:G1GJ1-22-MONOMER"/>
<dbReference type="Proteomes" id="UP000000579">
    <property type="component" value="Chromosome"/>
</dbReference>
<dbReference type="GO" id="GO:0009346">
    <property type="term" value="C:ATP-independent citrate lyase complex"/>
    <property type="evidence" value="ECO:0007669"/>
    <property type="project" value="InterPro"/>
</dbReference>
<dbReference type="GO" id="GO:0005737">
    <property type="term" value="C:cytoplasm"/>
    <property type="evidence" value="ECO:0007669"/>
    <property type="project" value="UniProtKB-SubCell"/>
</dbReference>
<dbReference type="GO" id="GO:0008815">
    <property type="term" value="F:citrate (pro-3S)-lyase activity"/>
    <property type="evidence" value="ECO:0007669"/>
    <property type="project" value="UniProtKB-EC"/>
</dbReference>
<dbReference type="GO" id="GO:0008814">
    <property type="term" value="F:citrate CoA-transferase activity"/>
    <property type="evidence" value="ECO:0007669"/>
    <property type="project" value="UniProtKB-EC"/>
</dbReference>
<dbReference type="GO" id="GO:0006084">
    <property type="term" value="P:acetyl-CoA metabolic process"/>
    <property type="evidence" value="ECO:0007669"/>
    <property type="project" value="InterPro"/>
</dbReference>
<dbReference type="Gene3D" id="3.40.1080.10">
    <property type="entry name" value="Glutaconate Coenzyme A-transferase"/>
    <property type="match status" value="2"/>
</dbReference>
<dbReference type="InterPro" id="IPR006472">
    <property type="entry name" value="Citrate_lyase_asu"/>
</dbReference>
<dbReference type="InterPro" id="IPR037171">
    <property type="entry name" value="NagB/RpiA_transferase-like"/>
</dbReference>
<dbReference type="NCBIfam" id="TIGR01584">
    <property type="entry name" value="citF"/>
    <property type="match status" value="1"/>
</dbReference>
<dbReference type="PANTHER" id="PTHR40596">
    <property type="entry name" value="CITRATE LYASE ALPHA CHAIN"/>
    <property type="match status" value="1"/>
</dbReference>
<dbReference type="PANTHER" id="PTHR40596:SF1">
    <property type="entry name" value="CITRATE LYASE ALPHA CHAIN"/>
    <property type="match status" value="1"/>
</dbReference>
<dbReference type="Pfam" id="PF04223">
    <property type="entry name" value="CitF"/>
    <property type="match status" value="1"/>
</dbReference>
<dbReference type="PIRSF" id="PIRSF009451">
    <property type="entry name" value="Citrt_lyas_alpha"/>
    <property type="match status" value="1"/>
</dbReference>
<dbReference type="SUPFAM" id="SSF100950">
    <property type="entry name" value="NagB/RpiA/CoA transferase-like"/>
    <property type="match status" value="2"/>
</dbReference>